<comment type="subcellular location">
    <subcellularLocation>
        <location evidence="2">Cell membrane</location>
        <topology evidence="2">Multi-pass membrane protein</topology>
    </subcellularLocation>
</comment>
<dbReference type="EMBL" id="Y15896">
    <property type="protein sequence ID" value="CAB75335.1"/>
    <property type="molecule type" value="Genomic_DNA"/>
</dbReference>
<dbReference type="EMBL" id="AL009126">
    <property type="protein sequence ID" value="CAB14729.1"/>
    <property type="molecule type" value="Genomic_DNA"/>
</dbReference>
<dbReference type="PIR" id="D69982">
    <property type="entry name" value="D69982"/>
</dbReference>
<dbReference type="RefSeq" id="NP_390647.1">
    <property type="nucleotide sequence ID" value="NC_000964.3"/>
</dbReference>
<dbReference type="RefSeq" id="WP_003229729.1">
    <property type="nucleotide sequence ID" value="NC_000964.3"/>
</dbReference>
<dbReference type="FunCoup" id="O32051">
    <property type="interactions" value="72"/>
</dbReference>
<dbReference type="STRING" id="224308.BSU27690"/>
<dbReference type="PaxDb" id="224308-BSU27690"/>
<dbReference type="EnsemblBacteria" id="CAB14729">
    <property type="protein sequence ID" value="CAB14729"/>
    <property type="gene ID" value="BSU_27690"/>
</dbReference>
<dbReference type="GeneID" id="938165"/>
<dbReference type="KEGG" id="bsu:BSU27690"/>
<dbReference type="PATRIC" id="fig|224308.43.peg.2891"/>
<dbReference type="eggNOG" id="ENOG5033314">
    <property type="taxonomic scope" value="Bacteria"/>
</dbReference>
<dbReference type="InParanoid" id="O32051"/>
<dbReference type="OrthoDB" id="2988991at2"/>
<dbReference type="BioCyc" id="BSUB:BSU27690-MONOMER"/>
<dbReference type="Proteomes" id="UP000001570">
    <property type="component" value="Chromosome"/>
</dbReference>
<dbReference type="GO" id="GO:0005886">
    <property type="term" value="C:plasma membrane"/>
    <property type="evidence" value="ECO:0007669"/>
    <property type="project" value="UniProtKB-SubCell"/>
</dbReference>
<dbReference type="InterPro" id="IPR023804">
    <property type="entry name" value="DUF3792_TM"/>
</dbReference>
<dbReference type="NCBIfam" id="TIGR04086">
    <property type="entry name" value="TIGR04086_membr"/>
    <property type="match status" value="1"/>
</dbReference>
<dbReference type="Pfam" id="PF12670">
    <property type="entry name" value="DUF3792"/>
    <property type="match status" value="1"/>
</dbReference>
<feature type="chain" id="PRO_0000375912" description="Uncharacterized membrane protein YrzE">
    <location>
        <begin position="1"/>
        <end position="150"/>
    </location>
</feature>
<feature type="transmembrane region" description="Helical" evidence="1">
    <location>
        <begin position="32"/>
        <end position="52"/>
    </location>
</feature>
<feature type="transmembrane region" description="Helical" evidence="1">
    <location>
        <begin position="64"/>
        <end position="84"/>
    </location>
</feature>
<feature type="transmembrane region" description="Helical" evidence="1">
    <location>
        <begin position="94"/>
        <end position="114"/>
    </location>
</feature>
<feature type="transmembrane region" description="Helical" evidence="1">
    <location>
        <begin position="123"/>
        <end position="143"/>
    </location>
</feature>
<reference key="1">
    <citation type="submission" date="1997-12" db="EMBL/GenBank/DDBJ databases">
        <title>A 17.8 kb segment in the spoVB-nadC region of the Bacillus subtilis 168 chromosome: sequencing and ruv operon identification.</title>
        <authorList>
            <person name="Tosato V."/>
            <person name="Bolotin A."/>
            <person name="Bertani I."/>
            <person name="Valentino I."/>
            <person name="Bruschi C.V."/>
        </authorList>
    </citation>
    <scope>NUCLEOTIDE SEQUENCE [GENOMIC DNA]</scope>
    <source>
        <strain>168</strain>
    </source>
</reference>
<reference key="2">
    <citation type="journal article" date="1997" name="Nature">
        <title>The complete genome sequence of the Gram-positive bacterium Bacillus subtilis.</title>
        <authorList>
            <person name="Kunst F."/>
            <person name="Ogasawara N."/>
            <person name="Moszer I."/>
            <person name="Albertini A.M."/>
            <person name="Alloni G."/>
            <person name="Azevedo V."/>
            <person name="Bertero M.G."/>
            <person name="Bessieres P."/>
            <person name="Bolotin A."/>
            <person name="Borchert S."/>
            <person name="Borriss R."/>
            <person name="Boursier L."/>
            <person name="Brans A."/>
            <person name="Braun M."/>
            <person name="Brignell S.C."/>
            <person name="Bron S."/>
            <person name="Brouillet S."/>
            <person name="Bruschi C.V."/>
            <person name="Caldwell B."/>
            <person name="Capuano V."/>
            <person name="Carter N.M."/>
            <person name="Choi S.-K."/>
            <person name="Codani J.-J."/>
            <person name="Connerton I.F."/>
            <person name="Cummings N.J."/>
            <person name="Daniel R.A."/>
            <person name="Denizot F."/>
            <person name="Devine K.M."/>
            <person name="Duesterhoeft A."/>
            <person name="Ehrlich S.D."/>
            <person name="Emmerson P.T."/>
            <person name="Entian K.-D."/>
            <person name="Errington J."/>
            <person name="Fabret C."/>
            <person name="Ferrari E."/>
            <person name="Foulger D."/>
            <person name="Fritz C."/>
            <person name="Fujita M."/>
            <person name="Fujita Y."/>
            <person name="Fuma S."/>
            <person name="Galizzi A."/>
            <person name="Galleron N."/>
            <person name="Ghim S.-Y."/>
            <person name="Glaser P."/>
            <person name="Goffeau A."/>
            <person name="Golightly E.J."/>
            <person name="Grandi G."/>
            <person name="Guiseppi G."/>
            <person name="Guy B.J."/>
            <person name="Haga K."/>
            <person name="Haiech J."/>
            <person name="Harwood C.R."/>
            <person name="Henaut A."/>
            <person name="Hilbert H."/>
            <person name="Holsappel S."/>
            <person name="Hosono S."/>
            <person name="Hullo M.-F."/>
            <person name="Itaya M."/>
            <person name="Jones L.-M."/>
            <person name="Joris B."/>
            <person name="Karamata D."/>
            <person name="Kasahara Y."/>
            <person name="Klaerr-Blanchard M."/>
            <person name="Klein C."/>
            <person name="Kobayashi Y."/>
            <person name="Koetter P."/>
            <person name="Koningstein G."/>
            <person name="Krogh S."/>
            <person name="Kumano M."/>
            <person name="Kurita K."/>
            <person name="Lapidus A."/>
            <person name="Lardinois S."/>
            <person name="Lauber J."/>
            <person name="Lazarevic V."/>
            <person name="Lee S.-M."/>
            <person name="Levine A."/>
            <person name="Liu H."/>
            <person name="Masuda S."/>
            <person name="Mauel C."/>
            <person name="Medigue C."/>
            <person name="Medina N."/>
            <person name="Mellado R.P."/>
            <person name="Mizuno M."/>
            <person name="Moestl D."/>
            <person name="Nakai S."/>
            <person name="Noback M."/>
            <person name="Noone D."/>
            <person name="O'Reilly M."/>
            <person name="Ogawa K."/>
            <person name="Ogiwara A."/>
            <person name="Oudega B."/>
            <person name="Park S.-H."/>
            <person name="Parro V."/>
            <person name="Pohl T.M."/>
            <person name="Portetelle D."/>
            <person name="Porwollik S."/>
            <person name="Prescott A.M."/>
            <person name="Presecan E."/>
            <person name="Pujic P."/>
            <person name="Purnelle B."/>
            <person name="Rapoport G."/>
            <person name="Rey M."/>
            <person name="Reynolds S."/>
            <person name="Rieger M."/>
            <person name="Rivolta C."/>
            <person name="Rocha E."/>
            <person name="Roche B."/>
            <person name="Rose M."/>
            <person name="Sadaie Y."/>
            <person name="Sato T."/>
            <person name="Scanlan E."/>
            <person name="Schleich S."/>
            <person name="Schroeter R."/>
            <person name="Scoffone F."/>
            <person name="Sekiguchi J."/>
            <person name="Sekowska A."/>
            <person name="Seror S.J."/>
            <person name="Serror P."/>
            <person name="Shin B.-S."/>
            <person name="Soldo B."/>
            <person name="Sorokin A."/>
            <person name="Tacconi E."/>
            <person name="Takagi T."/>
            <person name="Takahashi H."/>
            <person name="Takemaru K."/>
            <person name="Takeuchi M."/>
            <person name="Tamakoshi A."/>
            <person name="Tanaka T."/>
            <person name="Terpstra P."/>
            <person name="Tognoni A."/>
            <person name="Tosato V."/>
            <person name="Uchiyama S."/>
            <person name="Vandenbol M."/>
            <person name="Vannier F."/>
            <person name="Vassarotti A."/>
            <person name="Viari A."/>
            <person name="Wambutt R."/>
            <person name="Wedler E."/>
            <person name="Wedler H."/>
            <person name="Weitzenegger T."/>
            <person name="Winters P."/>
            <person name="Wipat A."/>
            <person name="Yamamoto H."/>
            <person name="Yamane K."/>
            <person name="Yasumoto K."/>
            <person name="Yata K."/>
            <person name="Yoshida K."/>
            <person name="Yoshikawa H.-F."/>
            <person name="Zumstein E."/>
            <person name="Yoshikawa H."/>
            <person name="Danchin A."/>
        </authorList>
    </citation>
    <scope>NUCLEOTIDE SEQUENCE [LARGE SCALE GENOMIC DNA]</scope>
    <source>
        <strain>168</strain>
    </source>
</reference>
<keyword id="KW-1003">Cell membrane</keyword>
<keyword id="KW-0472">Membrane</keyword>
<keyword id="KW-1185">Reference proteome</keyword>
<keyword id="KW-0812">Transmembrane</keyword>
<keyword id="KW-1133">Transmembrane helix</keyword>
<sequence length="150" mass="16325">MSDGFEQKEQKPFNTGREETIMEETKQVGKGILYGLIAIFSAMLLTSLAVSLLLTATSLEESSFNWLITAISFLSLFIGGFISGGKGKERGWMIGALTALSFSLIILLFQYLGFGKTFTAEQLIFHLGFLGVCMLGGIFGVNMRGNRSST</sequence>
<proteinExistence type="predicted"/>
<evidence type="ECO:0000255" key="1"/>
<evidence type="ECO:0000305" key="2"/>
<accession>O32051</accession>
<accession>Q799D8</accession>
<protein>
    <recommendedName>
        <fullName>Uncharacterized membrane protein YrzE</fullName>
    </recommendedName>
</protein>
<gene>
    <name type="primary">yrzE</name>
    <name type="ordered locus">BSU27690</name>
</gene>
<name>YRZE_BACSU</name>
<organism>
    <name type="scientific">Bacillus subtilis (strain 168)</name>
    <dbReference type="NCBI Taxonomy" id="224308"/>
    <lineage>
        <taxon>Bacteria</taxon>
        <taxon>Bacillati</taxon>
        <taxon>Bacillota</taxon>
        <taxon>Bacilli</taxon>
        <taxon>Bacillales</taxon>
        <taxon>Bacillaceae</taxon>
        <taxon>Bacillus</taxon>
    </lineage>
</organism>